<organism>
    <name type="scientific">Wolbachia sp. subsp. Brugia malayi (strain TRS)</name>
    <dbReference type="NCBI Taxonomy" id="292805"/>
    <lineage>
        <taxon>Bacteria</taxon>
        <taxon>Pseudomonadati</taxon>
        <taxon>Pseudomonadota</taxon>
        <taxon>Alphaproteobacteria</taxon>
        <taxon>Rickettsiales</taxon>
        <taxon>Anaplasmataceae</taxon>
        <taxon>Wolbachieae</taxon>
        <taxon>Wolbachia</taxon>
    </lineage>
</organism>
<sequence length="206" mass="23185">MGQKVNPIGFRLKINNNTWDSVWYANKDYKEKLHQDLFIRSYINESFKHAGLSKIIIERKVDLLSVTIHSSRPGVIIGKKGLDIEKVKQKIAEKVKNSVEVNVVGIKRPEIDAALISSSIAQQLEKRVSFRRAMKKAIQSCLRMGGGGIKVGCSGRLGGAEIARTEWYKEGRLPLHTLRANIDYAFCEAKTIYGIIGVKVWVYIVN</sequence>
<proteinExistence type="inferred from homology"/>
<evidence type="ECO:0000255" key="1">
    <source>
        <dbReference type="HAMAP-Rule" id="MF_01309"/>
    </source>
</evidence>
<evidence type="ECO:0000305" key="2"/>
<protein>
    <recommendedName>
        <fullName evidence="1">Small ribosomal subunit protein uS3</fullName>
    </recommendedName>
    <alternativeName>
        <fullName evidence="2">30S ribosomal protein S3</fullName>
    </alternativeName>
</protein>
<reference key="1">
    <citation type="journal article" date="2005" name="PLoS Biol.">
        <title>The Wolbachia genome of Brugia malayi: endosymbiont evolution within a human pathogenic nematode.</title>
        <authorList>
            <person name="Foster J."/>
            <person name="Ganatra M."/>
            <person name="Kamal I."/>
            <person name="Ware J."/>
            <person name="Makarova K."/>
            <person name="Ivanova N."/>
            <person name="Bhattacharyya A."/>
            <person name="Kapatral V."/>
            <person name="Kumar S."/>
            <person name="Posfai J."/>
            <person name="Vincze T."/>
            <person name="Ingram J."/>
            <person name="Moran L."/>
            <person name="Lapidus A."/>
            <person name="Omelchenko M."/>
            <person name="Kyrpides N."/>
            <person name="Ghedin E."/>
            <person name="Wang S."/>
            <person name="Goltsman E."/>
            <person name="Joukov V."/>
            <person name="Ostrovskaya O."/>
            <person name="Tsukerman K."/>
            <person name="Mazur M."/>
            <person name="Comb D."/>
            <person name="Koonin E."/>
            <person name="Slatko B."/>
        </authorList>
    </citation>
    <scope>NUCLEOTIDE SEQUENCE [LARGE SCALE GENOMIC DNA]</scope>
    <source>
        <strain>TRS</strain>
    </source>
</reference>
<comment type="function">
    <text evidence="1">Binds the lower part of the 30S subunit head. Binds mRNA in the 70S ribosome, positioning it for translation.</text>
</comment>
<comment type="subunit">
    <text evidence="1">Part of the 30S ribosomal subunit. Forms a tight complex with proteins S10 and S14.</text>
</comment>
<comment type="similarity">
    <text evidence="1">Belongs to the universal ribosomal protein uS3 family.</text>
</comment>
<dbReference type="EMBL" id="AE017321">
    <property type="protein sequence ID" value="AAW70924.1"/>
    <property type="molecule type" value="Genomic_DNA"/>
</dbReference>
<dbReference type="RefSeq" id="WP_011256534.1">
    <property type="nucleotide sequence ID" value="NC_006833.1"/>
</dbReference>
<dbReference type="SMR" id="Q5GSV0"/>
<dbReference type="STRING" id="292805.Wbm0335"/>
<dbReference type="KEGG" id="wbm:Wbm0335"/>
<dbReference type="eggNOG" id="COG0092">
    <property type="taxonomic scope" value="Bacteria"/>
</dbReference>
<dbReference type="HOGENOM" id="CLU_058591_0_2_5"/>
<dbReference type="Proteomes" id="UP000000534">
    <property type="component" value="Chromosome"/>
</dbReference>
<dbReference type="GO" id="GO:0022627">
    <property type="term" value="C:cytosolic small ribosomal subunit"/>
    <property type="evidence" value="ECO:0007669"/>
    <property type="project" value="TreeGrafter"/>
</dbReference>
<dbReference type="GO" id="GO:0003729">
    <property type="term" value="F:mRNA binding"/>
    <property type="evidence" value="ECO:0007669"/>
    <property type="project" value="UniProtKB-UniRule"/>
</dbReference>
<dbReference type="GO" id="GO:0019843">
    <property type="term" value="F:rRNA binding"/>
    <property type="evidence" value="ECO:0007669"/>
    <property type="project" value="UniProtKB-UniRule"/>
</dbReference>
<dbReference type="GO" id="GO:0003735">
    <property type="term" value="F:structural constituent of ribosome"/>
    <property type="evidence" value="ECO:0007669"/>
    <property type="project" value="InterPro"/>
</dbReference>
<dbReference type="GO" id="GO:0006412">
    <property type="term" value="P:translation"/>
    <property type="evidence" value="ECO:0007669"/>
    <property type="project" value="UniProtKB-UniRule"/>
</dbReference>
<dbReference type="CDD" id="cd02412">
    <property type="entry name" value="KH-II_30S_S3"/>
    <property type="match status" value="1"/>
</dbReference>
<dbReference type="FunFam" id="3.30.300.20:FF:000001">
    <property type="entry name" value="30S ribosomal protein S3"/>
    <property type="match status" value="1"/>
</dbReference>
<dbReference type="Gene3D" id="3.30.300.20">
    <property type="match status" value="1"/>
</dbReference>
<dbReference type="Gene3D" id="3.30.1140.32">
    <property type="entry name" value="Ribosomal protein S3, C-terminal domain"/>
    <property type="match status" value="1"/>
</dbReference>
<dbReference type="HAMAP" id="MF_01309_B">
    <property type="entry name" value="Ribosomal_uS3_B"/>
    <property type="match status" value="1"/>
</dbReference>
<dbReference type="InterPro" id="IPR004087">
    <property type="entry name" value="KH_dom"/>
</dbReference>
<dbReference type="InterPro" id="IPR015946">
    <property type="entry name" value="KH_dom-like_a/b"/>
</dbReference>
<dbReference type="InterPro" id="IPR004044">
    <property type="entry name" value="KH_dom_type_2"/>
</dbReference>
<dbReference type="InterPro" id="IPR009019">
    <property type="entry name" value="KH_sf_prok-type"/>
</dbReference>
<dbReference type="InterPro" id="IPR036419">
    <property type="entry name" value="Ribosomal_S3_C_sf"/>
</dbReference>
<dbReference type="InterPro" id="IPR005704">
    <property type="entry name" value="Ribosomal_uS3_bac-typ"/>
</dbReference>
<dbReference type="InterPro" id="IPR001351">
    <property type="entry name" value="Ribosomal_uS3_C"/>
</dbReference>
<dbReference type="InterPro" id="IPR018280">
    <property type="entry name" value="Ribosomal_uS3_CS"/>
</dbReference>
<dbReference type="NCBIfam" id="TIGR01009">
    <property type="entry name" value="rpsC_bact"/>
    <property type="match status" value="1"/>
</dbReference>
<dbReference type="PANTHER" id="PTHR11760">
    <property type="entry name" value="30S/40S RIBOSOMAL PROTEIN S3"/>
    <property type="match status" value="1"/>
</dbReference>
<dbReference type="PANTHER" id="PTHR11760:SF19">
    <property type="entry name" value="SMALL RIBOSOMAL SUBUNIT PROTEIN US3C"/>
    <property type="match status" value="1"/>
</dbReference>
<dbReference type="Pfam" id="PF07650">
    <property type="entry name" value="KH_2"/>
    <property type="match status" value="1"/>
</dbReference>
<dbReference type="Pfam" id="PF00189">
    <property type="entry name" value="Ribosomal_S3_C"/>
    <property type="match status" value="1"/>
</dbReference>
<dbReference type="SMART" id="SM00322">
    <property type="entry name" value="KH"/>
    <property type="match status" value="1"/>
</dbReference>
<dbReference type="SUPFAM" id="SSF54814">
    <property type="entry name" value="Prokaryotic type KH domain (KH-domain type II)"/>
    <property type="match status" value="1"/>
</dbReference>
<dbReference type="SUPFAM" id="SSF54821">
    <property type="entry name" value="Ribosomal protein S3 C-terminal domain"/>
    <property type="match status" value="1"/>
</dbReference>
<dbReference type="PROSITE" id="PS50823">
    <property type="entry name" value="KH_TYPE_2"/>
    <property type="match status" value="1"/>
</dbReference>
<dbReference type="PROSITE" id="PS00548">
    <property type="entry name" value="RIBOSOMAL_S3"/>
    <property type="match status" value="1"/>
</dbReference>
<keyword id="KW-1185">Reference proteome</keyword>
<keyword id="KW-0687">Ribonucleoprotein</keyword>
<keyword id="KW-0689">Ribosomal protein</keyword>
<keyword id="KW-0694">RNA-binding</keyword>
<keyword id="KW-0699">rRNA-binding</keyword>
<gene>
    <name evidence="1" type="primary">rpsC</name>
    <name type="ordered locus">Wbm0335</name>
</gene>
<accession>Q5GSV0</accession>
<feature type="chain" id="PRO_0000230741" description="Small ribosomal subunit protein uS3">
    <location>
        <begin position="1"/>
        <end position="206"/>
    </location>
</feature>
<feature type="domain" description="KH type-2" evidence="1">
    <location>
        <begin position="39"/>
        <end position="107"/>
    </location>
</feature>
<name>RS3_WOLTR</name>